<evidence type="ECO:0000255" key="1">
    <source>
        <dbReference type="HAMAP-Rule" id="MF_00509"/>
    </source>
</evidence>
<evidence type="ECO:0000256" key="2">
    <source>
        <dbReference type="SAM" id="MobiDB-lite"/>
    </source>
</evidence>
<feature type="chain" id="PRO_1000015159" description="Cell division protein ZipA">
    <location>
        <begin position="1"/>
        <end position="346"/>
    </location>
</feature>
<feature type="topological domain" description="Periplasmic" evidence="1">
    <location>
        <begin position="1"/>
        <end position="6"/>
    </location>
</feature>
<feature type="transmembrane region" description="Helical" evidence="1">
    <location>
        <begin position="7"/>
        <end position="27"/>
    </location>
</feature>
<feature type="topological domain" description="Cytoplasmic" evidence="1">
    <location>
        <begin position="28"/>
        <end position="346"/>
    </location>
</feature>
<feature type="region of interest" description="Disordered" evidence="2">
    <location>
        <begin position="76"/>
        <end position="103"/>
    </location>
</feature>
<feature type="region of interest" description="Disordered" evidence="2">
    <location>
        <begin position="121"/>
        <end position="145"/>
    </location>
</feature>
<name>ZIPA_SHESM</name>
<comment type="function">
    <text evidence="1">Essential cell division protein that stabilizes the FtsZ protofilaments by cross-linking them and that serves as a cytoplasmic membrane anchor for the Z ring. Also required for the recruitment to the septal ring of downstream cell division proteins.</text>
</comment>
<comment type="subunit">
    <text evidence="1">Interacts with FtsZ via their C-terminal domains.</text>
</comment>
<comment type="subcellular location">
    <subcellularLocation>
        <location evidence="1">Cell inner membrane</location>
        <topology evidence="1">Single-pass type I membrane protein</topology>
    </subcellularLocation>
    <text evidence="1">Localizes to the Z ring in an FtsZ-dependent manner.</text>
</comment>
<comment type="similarity">
    <text evidence="1">Belongs to the ZipA family.</text>
</comment>
<dbReference type="EMBL" id="CP000446">
    <property type="protein sequence ID" value="ABI38585.1"/>
    <property type="molecule type" value="Genomic_DNA"/>
</dbReference>
<dbReference type="RefSeq" id="WP_011622289.1">
    <property type="nucleotide sequence ID" value="NC_008321.1"/>
</dbReference>
<dbReference type="SMR" id="Q0HK32"/>
<dbReference type="KEGG" id="she:Shewmr4_1507"/>
<dbReference type="HOGENOM" id="CLU_030174_1_0_6"/>
<dbReference type="GO" id="GO:0032153">
    <property type="term" value="C:cell division site"/>
    <property type="evidence" value="ECO:0007669"/>
    <property type="project" value="UniProtKB-UniRule"/>
</dbReference>
<dbReference type="GO" id="GO:0005886">
    <property type="term" value="C:plasma membrane"/>
    <property type="evidence" value="ECO:0007669"/>
    <property type="project" value="UniProtKB-SubCell"/>
</dbReference>
<dbReference type="GO" id="GO:0000917">
    <property type="term" value="P:division septum assembly"/>
    <property type="evidence" value="ECO:0007669"/>
    <property type="project" value="TreeGrafter"/>
</dbReference>
<dbReference type="GO" id="GO:0043093">
    <property type="term" value="P:FtsZ-dependent cytokinesis"/>
    <property type="evidence" value="ECO:0007669"/>
    <property type="project" value="UniProtKB-UniRule"/>
</dbReference>
<dbReference type="FunFam" id="3.30.1400.10:FF:000001">
    <property type="entry name" value="Cell division protein ZipA"/>
    <property type="match status" value="1"/>
</dbReference>
<dbReference type="Gene3D" id="3.30.1400.10">
    <property type="entry name" value="ZipA, C-terminal FtsZ-binding domain"/>
    <property type="match status" value="1"/>
</dbReference>
<dbReference type="HAMAP" id="MF_00509">
    <property type="entry name" value="ZipA"/>
    <property type="match status" value="1"/>
</dbReference>
<dbReference type="InterPro" id="IPR011919">
    <property type="entry name" value="Cell_div_ZipA"/>
</dbReference>
<dbReference type="InterPro" id="IPR007449">
    <property type="entry name" value="ZipA_FtsZ-bd_C"/>
</dbReference>
<dbReference type="InterPro" id="IPR036765">
    <property type="entry name" value="ZipA_FtsZ-bd_C_sf"/>
</dbReference>
<dbReference type="NCBIfam" id="TIGR02205">
    <property type="entry name" value="septum_zipA"/>
    <property type="match status" value="1"/>
</dbReference>
<dbReference type="PANTHER" id="PTHR38685">
    <property type="entry name" value="CELL DIVISION PROTEIN ZIPA"/>
    <property type="match status" value="1"/>
</dbReference>
<dbReference type="PANTHER" id="PTHR38685:SF1">
    <property type="entry name" value="CELL DIVISION PROTEIN ZIPA"/>
    <property type="match status" value="1"/>
</dbReference>
<dbReference type="Pfam" id="PF04354">
    <property type="entry name" value="ZipA_C"/>
    <property type="match status" value="1"/>
</dbReference>
<dbReference type="SMART" id="SM00771">
    <property type="entry name" value="ZipA_C"/>
    <property type="match status" value="1"/>
</dbReference>
<dbReference type="SUPFAM" id="SSF64383">
    <property type="entry name" value="Cell-division protein ZipA, C-terminal domain"/>
    <property type="match status" value="1"/>
</dbReference>
<sequence>MEDLQLVLFVLGAIAIVAVLVHGFWSIRRQQPKSLKDSPMGNFYKKQAERGEGAPKRVDADGFDADGIGAVRVRKANEAHTPEAPAFNPYLKQEAKTQPQPVEPVQVEPKPLFEQEPSMAQPDFSLQSPTAKEQHRGPKASRQEPVLQGHSANLAQAHVGQSHAAMVAQKVAEEQRAQVQMPTQTALFDDEEPYEEEQSQAVEQADDDLGEPRDVLVLHVVAKEGQQLNGAELLPCFLTLNFKYGDMNIFHRHVDNAGNGKVLFSIANMVKPGVFDPDNMEQFSTQGVVFFMTLPCYGDALMNFSIMLNSARQLADDIDAVVLDGQRQPWGEFTKQDYLHRIRANA</sequence>
<accession>Q0HK32</accession>
<reference key="1">
    <citation type="submission" date="2006-08" db="EMBL/GenBank/DDBJ databases">
        <title>Complete sequence of Shewanella sp. MR-4.</title>
        <authorList>
            <consortium name="US DOE Joint Genome Institute"/>
            <person name="Copeland A."/>
            <person name="Lucas S."/>
            <person name="Lapidus A."/>
            <person name="Barry K."/>
            <person name="Detter J.C."/>
            <person name="Glavina del Rio T."/>
            <person name="Hammon N."/>
            <person name="Israni S."/>
            <person name="Dalin E."/>
            <person name="Tice H."/>
            <person name="Pitluck S."/>
            <person name="Kiss H."/>
            <person name="Brettin T."/>
            <person name="Bruce D."/>
            <person name="Han C."/>
            <person name="Tapia R."/>
            <person name="Gilna P."/>
            <person name="Schmutz J."/>
            <person name="Larimer F."/>
            <person name="Land M."/>
            <person name="Hauser L."/>
            <person name="Kyrpides N."/>
            <person name="Mikhailova N."/>
            <person name="Nealson K."/>
            <person name="Konstantinidis K."/>
            <person name="Klappenbach J."/>
            <person name="Tiedje J."/>
            <person name="Richardson P."/>
        </authorList>
    </citation>
    <scope>NUCLEOTIDE SEQUENCE [LARGE SCALE GENOMIC DNA]</scope>
    <source>
        <strain>MR-4</strain>
    </source>
</reference>
<gene>
    <name evidence="1" type="primary">zipA</name>
    <name type="ordered locus">Shewmr4_1507</name>
</gene>
<proteinExistence type="inferred from homology"/>
<keyword id="KW-0131">Cell cycle</keyword>
<keyword id="KW-0132">Cell division</keyword>
<keyword id="KW-0997">Cell inner membrane</keyword>
<keyword id="KW-1003">Cell membrane</keyword>
<keyword id="KW-0472">Membrane</keyword>
<keyword id="KW-0812">Transmembrane</keyword>
<keyword id="KW-1133">Transmembrane helix</keyword>
<protein>
    <recommendedName>
        <fullName evidence="1">Cell division protein ZipA</fullName>
    </recommendedName>
</protein>
<organism>
    <name type="scientific">Shewanella sp. (strain MR-4)</name>
    <dbReference type="NCBI Taxonomy" id="60480"/>
    <lineage>
        <taxon>Bacteria</taxon>
        <taxon>Pseudomonadati</taxon>
        <taxon>Pseudomonadota</taxon>
        <taxon>Gammaproteobacteria</taxon>
        <taxon>Alteromonadales</taxon>
        <taxon>Shewanellaceae</taxon>
        <taxon>Shewanella</taxon>
    </lineage>
</organism>